<name>RL10_PHEZH</name>
<comment type="function">
    <text evidence="1">Forms part of the ribosomal stalk, playing a central role in the interaction of the ribosome with GTP-bound translation factors.</text>
</comment>
<comment type="subunit">
    <text evidence="1">Part of the ribosomal stalk of the 50S ribosomal subunit. The N-terminus interacts with L11 and the large rRNA to form the base of the stalk. The C-terminus forms an elongated spine to which L12 dimers bind in a sequential fashion forming a multimeric L10(L12)X complex.</text>
</comment>
<comment type="similarity">
    <text evidence="1">Belongs to the universal ribosomal protein uL10 family.</text>
</comment>
<evidence type="ECO:0000255" key="1">
    <source>
        <dbReference type="HAMAP-Rule" id="MF_00362"/>
    </source>
</evidence>
<evidence type="ECO:0000305" key="2"/>
<protein>
    <recommendedName>
        <fullName evidence="1">Large ribosomal subunit protein uL10</fullName>
    </recommendedName>
    <alternativeName>
        <fullName evidence="2">50S ribosomal protein L10</fullName>
    </alternativeName>
</protein>
<gene>
    <name evidence="1" type="primary">rplJ</name>
    <name type="ordered locus">PHZ_c1216</name>
</gene>
<keyword id="KW-1185">Reference proteome</keyword>
<keyword id="KW-0687">Ribonucleoprotein</keyword>
<keyword id="KW-0689">Ribosomal protein</keyword>
<keyword id="KW-0694">RNA-binding</keyword>
<keyword id="KW-0699">rRNA-binding</keyword>
<proteinExistence type="inferred from homology"/>
<sequence>MDRAQKQEAIEALKGVFADSGAVVVTHYLGLTVAEMTDLRGKLREQGAQLKVVKNTLAQKALDGSVGEAGDALFKGPVAIAFAPDPVSAAKVATQYAKDNDKFTVVGGLMGQQVLDQKGVSALATLPSLDQLRGKIIGLLQAPATKVAGVLQAPAGQLARVMGAYAAKDAA</sequence>
<reference key="1">
    <citation type="journal article" date="2008" name="BMC Genomics">
        <title>Complete genome of Phenylobacterium zucineum - a novel facultative intracellular bacterium isolated from human erythroleukemia cell line K562.</title>
        <authorList>
            <person name="Luo Y."/>
            <person name="Xu X."/>
            <person name="Ding Z."/>
            <person name="Liu Z."/>
            <person name="Zhang B."/>
            <person name="Yan Z."/>
            <person name="Sun J."/>
            <person name="Hu S."/>
            <person name="Hu X."/>
        </authorList>
    </citation>
    <scope>NUCLEOTIDE SEQUENCE [LARGE SCALE GENOMIC DNA]</scope>
    <source>
        <strain>HLK1</strain>
    </source>
</reference>
<dbReference type="EMBL" id="CP000747">
    <property type="protein sequence ID" value="ACG77630.1"/>
    <property type="molecule type" value="Genomic_DNA"/>
</dbReference>
<dbReference type="RefSeq" id="WP_012521775.1">
    <property type="nucleotide sequence ID" value="NC_011144.1"/>
</dbReference>
<dbReference type="SMR" id="B4R8K3"/>
<dbReference type="STRING" id="450851.PHZ_c1216"/>
<dbReference type="KEGG" id="pzu:PHZ_c1216"/>
<dbReference type="eggNOG" id="COG0244">
    <property type="taxonomic scope" value="Bacteria"/>
</dbReference>
<dbReference type="HOGENOM" id="CLU_092227_0_0_5"/>
<dbReference type="OrthoDB" id="9791972at2"/>
<dbReference type="Proteomes" id="UP000001868">
    <property type="component" value="Chromosome"/>
</dbReference>
<dbReference type="GO" id="GO:0015934">
    <property type="term" value="C:large ribosomal subunit"/>
    <property type="evidence" value="ECO:0007669"/>
    <property type="project" value="InterPro"/>
</dbReference>
<dbReference type="GO" id="GO:0070180">
    <property type="term" value="F:large ribosomal subunit rRNA binding"/>
    <property type="evidence" value="ECO:0007669"/>
    <property type="project" value="UniProtKB-UniRule"/>
</dbReference>
<dbReference type="GO" id="GO:0003735">
    <property type="term" value="F:structural constituent of ribosome"/>
    <property type="evidence" value="ECO:0007669"/>
    <property type="project" value="InterPro"/>
</dbReference>
<dbReference type="GO" id="GO:0006412">
    <property type="term" value="P:translation"/>
    <property type="evidence" value="ECO:0007669"/>
    <property type="project" value="UniProtKB-UniRule"/>
</dbReference>
<dbReference type="CDD" id="cd05797">
    <property type="entry name" value="Ribosomal_L10"/>
    <property type="match status" value="1"/>
</dbReference>
<dbReference type="Gene3D" id="3.30.70.1730">
    <property type="match status" value="1"/>
</dbReference>
<dbReference type="Gene3D" id="6.10.250.290">
    <property type="match status" value="1"/>
</dbReference>
<dbReference type="HAMAP" id="MF_00362">
    <property type="entry name" value="Ribosomal_uL10"/>
    <property type="match status" value="1"/>
</dbReference>
<dbReference type="InterPro" id="IPR001790">
    <property type="entry name" value="Ribosomal_uL10"/>
</dbReference>
<dbReference type="InterPro" id="IPR043141">
    <property type="entry name" value="Ribosomal_uL10-like_sf"/>
</dbReference>
<dbReference type="InterPro" id="IPR022973">
    <property type="entry name" value="Ribosomal_uL10_bac"/>
</dbReference>
<dbReference type="InterPro" id="IPR047865">
    <property type="entry name" value="Ribosomal_uL10_bac_type"/>
</dbReference>
<dbReference type="InterPro" id="IPR002363">
    <property type="entry name" value="Ribosomal_uL10_CS_bac"/>
</dbReference>
<dbReference type="NCBIfam" id="NF000955">
    <property type="entry name" value="PRK00099.1-1"/>
    <property type="match status" value="1"/>
</dbReference>
<dbReference type="PANTHER" id="PTHR11560">
    <property type="entry name" value="39S RIBOSOMAL PROTEIN L10, MITOCHONDRIAL"/>
    <property type="match status" value="1"/>
</dbReference>
<dbReference type="Pfam" id="PF00466">
    <property type="entry name" value="Ribosomal_L10"/>
    <property type="match status" value="1"/>
</dbReference>
<dbReference type="SUPFAM" id="SSF160369">
    <property type="entry name" value="Ribosomal protein L10-like"/>
    <property type="match status" value="1"/>
</dbReference>
<dbReference type="PROSITE" id="PS01109">
    <property type="entry name" value="RIBOSOMAL_L10"/>
    <property type="match status" value="1"/>
</dbReference>
<accession>B4R8K3</accession>
<organism>
    <name type="scientific">Phenylobacterium zucineum (strain HLK1)</name>
    <dbReference type="NCBI Taxonomy" id="450851"/>
    <lineage>
        <taxon>Bacteria</taxon>
        <taxon>Pseudomonadati</taxon>
        <taxon>Pseudomonadota</taxon>
        <taxon>Alphaproteobacteria</taxon>
        <taxon>Caulobacterales</taxon>
        <taxon>Caulobacteraceae</taxon>
        <taxon>Phenylobacterium</taxon>
    </lineage>
</organism>
<feature type="chain" id="PRO_1000120994" description="Large ribosomal subunit protein uL10">
    <location>
        <begin position="1"/>
        <end position="171"/>
    </location>
</feature>